<name>SOP4_KLULA</name>
<gene>
    <name type="primary">SOP4</name>
    <name type="ordered locus">KLLA0B07645g</name>
</gene>
<protein>
    <recommendedName>
        <fullName>Protein SOP4</fullName>
    </recommendedName>
</protein>
<sequence length="234" mass="27120">MNFVLFCFLVWQFVNPGAAFDIKGRLDLKVRNVSRHDISRTYFNLYRIRNPNDDSEWDSYSQSSKLENINGEFTFSDVPIDTGINRTTYFTLHSHSNEFNLKPNRILIQIVGNGQDQEPNLSAFENRFGREYFPSPDITYPETLNPLPLDSANRLTITTMNKQPYRKYIKIRNPGILESGPIASVLRSKFKLAGVVTVIFLVLFPILLEKFDPETAKAMRQEKMHRENAKYVSK</sequence>
<accession>Q6CW19</accession>
<dbReference type="EMBL" id="CR382122">
    <property type="protein sequence ID" value="CAH02263.1"/>
    <property type="molecule type" value="Genomic_DNA"/>
</dbReference>
<dbReference type="RefSeq" id="XP_451870.1">
    <property type="nucleotide sequence ID" value="XM_451870.1"/>
</dbReference>
<dbReference type="SMR" id="Q6CW19"/>
<dbReference type="FunCoup" id="Q6CW19">
    <property type="interactions" value="43"/>
</dbReference>
<dbReference type="STRING" id="284590.Q6CW19"/>
<dbReference type="GlyCosmos" id="Q6CW19">
    <property type="glycosylation" value="3 sites, No reported glycans"/>
</dbReference>
<dbReference type="PaxDb" id="284590-Q6CW19"/>
<dbReference type="KEGG" id="kla:KLLA0_B07645g"/>
<dbReference type="eggNOG" id="ENOG502RXGD">
    <property type="taxonomic scope" value="Eukaryota"/>
</dbReference>
<dbReference type="HOGENOM" id="CLU_102669_0_0_1"/>
<dbReference type="InParanoid" id="Q6CW19"/>
<dbReference type="OMA" id="PYITVEL"/>
<dbReference type="Proteomes" id="UP000000598">
    <property type="component" value="Chromosome B"/>
</dbReference>
<dbReference type="GO" id="GO:0005789">
    <property type="term" value="C:endoplasmic reticulum membrane"/>
    <property type="evidence" value="ECO:0007669"/>
    <property type="project" value="UniProtKB-SubCell"/>
</dbReference>
<dbReference type="GO" id="GO:0015031">
    <property type="term" value="P:protein transport"/>
    <property type="evidence" value="ECO:0007669"/>
    <property type="project" value="UniProtKB-KW"/>
</dbReference>
<dbReference type="InterPro" id="IPR031395">
    <property type="entry name" value="Sop4"/>
</dbReference>
<dbReference type="Pfam" id="PF17081">
    <property type="entry name" value="SOP4"/>
    <property type="match status" value="1"/>
</dbReference>
<evidence type="ECO:0000250" key="1"/>
<evidence type="ECO:0000255" key="2"/>
<evidence type="ECO:0000305" key="3"/>
<keyword id="KW-0256">Endoplasmic reticulum</keyword>
<keyword id="KW-0325">Glycoprotein</keyword>
<keyword id="KW-0472">Membrane</keyword>
<keyword id="KW-0653">Protein transport</keyword>
<keyword id="KW-1185">Reference proteome</keyword>
<keyword id="KW-0732">Signal</keyword>
<keyword id="KW-0812">Transmembrane</keyword>
<keyword id="KW-1133">Transmembrane helix</keyword>
<keyword id="KW-0813">Transport</keyword>
<organism>
    <name type="scientific">Kluyveromyces lactis (strain ATCC 8585 / CBS 2359 / DSM 70799 / NBRC 1267 / NRRL Y-1140 / WM37)</name>
    <name type="common">Yeast</name>
    <name type="synonym">Candida sphaerica</name>
    <dbReference type="NCBI Taxonomy" id="284590"/>
    <lineage>
        <taxon>Eukaryota</taxon>
        <taxon>Fungi</taxon>
        <taxon>Dikarya</taxon>
        <taxon>Ascomycota</taxon>
        <taxon>Saccharomycotina</taxon>
        <taxon>Saccharomycetes</taxon>
        <taxon>Saccharomycetales</taxon>
        <taxon>Saccharomycetaceae</taxon>
        <taxon>Kluyveromyces</taxon>
    </lineage>
</organism>
<feature type="signal peptide" evidence="2">
    <location>
        <begin position="1"/>
        <end position="19"/>
    </location>
</feature>
<feature type="chain" id="PRO_0000324497" description="Protein SOP4">
    <location>
        <begin position="20"/>
        <end position="234"/>
    </location>
</feature>
<feature type="topological domain" description="Lumenal" evidence="2">
    <location>
        <begin position="20"/>
        <end position="191"/>
    </location>
</feature>
<feature type="transmembrane region" description="Helical" evidence="2">
    <location>
        <begin position="192"/>
        <end position="212"/>
    </location>
</feature>
<feature type="topological domain" description="Cytoplasmic" evidence="2">
    <location>
        <begin position="213"/>
        <end position="234"/>
    </location>
</feature>
<feature type="glycosylation site" description="N-linked (GlcNAc...) asparagine" evidence="2">
    <location>
        <position position="32"/>
    </location>
</feature>
<feature type="glycosylation site" description="N-linked (GlcNAc...) asparagine" evidence="2">
    <location>
        <position position="85"/>
    </location>
</feature>
<feature type="glycosylation site" description="N-linked (GlcNAc...) asparagine" evidence="2">
    <location>
        <position position="120"/>
    </location>
</feature>
<comment type="function">
    <text evidence="1">Involved in the export of PMA1, possibly through the monitoring or assisting of PMA1 folding and acquisition of competence to enter vesicles.</text>
</comment>
<comment type="subcellular location">
    <subcellularLocation>
        <location evidence="1">Endoplasmic reticulum membrane</location>
        <topology evidence="1">Single-pass type I membrane protein</topology>
    </subcellularLocation>
</comment>
<comment type="similarity">
    <text evidence="3">Belongs to the SOP4 family.</text>
</comment>
<reference key="1">
    <citation type="journal article" date="2004" name="Nature">
        <title>Genome evolution in yeasts.</title>
        <authorList>
            <person name="Dujon B."/>
            <person name="Sherman D."/>
            <person name="Fischer G."/>
            <person name="Durrens P."/>
            <person name="Casaregola S."/>
            <person name="Lafontaine I."/>
            <person name="de Montigny J."/>
            <person name="Marck C."/>
            <person name="Neuveglise C."/>
            <person name="Talla E."/>
            <person name="Goffard N."/>
            <person name="Frangeul L."/>
            <person name="Aigle M."/>
            <person name="Anthouard V."/>
            <person name="Babour A."/>
            <person name="Barbe V."/>
            <person name="Barnay S."/>
            <person name="Blanchin S."/>
            <person name="Beckerich J.-M."/>
            <person name="Beyne E."/>
            <person name="Bleykasten C."/>
            <person name="Boisrame A."/>
            <person name="Boyer J."/>
            <person name="Cattolico L."/>
            <person name="Confanioleri F."/>
            <person name="de Daruvar A."/>
            <person name="Despons L."/>
            <person name="Fabre E."/>
            <person name="Fairhead C."/>
            <person name="Ferry-Dumazet H."/>
            <person name="Groppi A."/>
            <person name="Hantraye F."/>
            <person name="Hennequin C."/>
            <person name="Jauniaux N."/>
            <person name="Joyet P."/>
            <person name="Kachouri R."/>
            <person name="Kerrest A."/>
            <person name="Koszul R."/>
            <person name="Lemaire M."/>
            <person name="Lesur I."/>
            <person name="Ma L."/>
            <person name="Muller H."/>
            <person name="Nicaud J.-M."/>
            <person name="Nikolski M."/>
            <person name="Oztas S."/>
            <person name="Ozier-Kalogeropoulos O."/>
            <person name="Pellenz S."/>
            <person name="Potier S."/>
            <person name="Richard G.-F."/>
            <person name="Straub M.-L."/>
            <person name="Suleau A."/>
            <person name="Swennen D."/>
            <person name="Tekaia F."/>
            <person name="Wesolowski-Louvel M."/>
            <person name="Westhof E."/>
            <person name="Wirth B."/>
            <person name="Zeniou-Meyer M."/>
            <person name="Zivanovic Y."/>
            <person name="Bolotin-Fukuhara M."/>
            <person name="Thierry A."/>
            <person name="Bouchier C."/>
            <person name="Caudron B."/>
            <person name="Scarpelli C."/>
            <person name="Gaillardin C."/>
            <person name="Weissenbach J."/>
            <person name="Wincker P."/>
            <person name="Souciet J.-L."/>
        </authorList>
    </citation>
    <scope>NUCLEOTIDE SEQUENCE [LARGE SCALE GENOMIC DNA]</scope>
    <source>
        <strain>ATCC 8585 / CBS 2359 / DSM 70799 / NBRC 1267 / NRRL Y-1140 / WM37</strain>
    </source>
</reference>
<proteinExistence type="inferred from homology"/>